<dbReference type="EMBL" id="BX950851">
    <property type="protein sequence ID" value="CAG76085.1"/>
    <property type="molecule type" value="Genomic_DNA"/>
</dbReference>
<dbReference type="RefSeq" id="WP_011094709.1">
    <property type="nucleotide sequence ID" value="NC_004547.2"/>
</dbReference>
<dbReference type="SMR" id="Q6D2A9"/>
<dbReference type="STRING" id="218491.ECA3187"/>
<dbReference type="KEGG" id="eca:ECA3187"/>
<dbReference type="PATRIC" id="fig|218491.5.peg.3228"/>
<dbReference type="eggNOG" id="COG0477">
    <property type="taxonomic scope" value="Bacteria"/>
</dbReference>
<dbReference type="HOGENOM" id="CLU_000960_28_0_6"/>
<dbReference type="OrthoDB" id="9812221at2"/>
<dbReference type="Proteomes" id="UP000007966">
    <property type="component" value="Chromosome"/>
</dbReference>
<dbReference type="GO" id="GO:0005886">
    <property type="term" value="C:plasma membrane"/>
    <property type="evidence" value="ECO:0007669"/>
    <property type="project" value="UniProtKB-SubCell"/>
</dbReference>
<dbReference type="GO" id="GO:0022857">
    <property type="term" value="F:transmembrane transporter activity"/>
    <property type="evidence" value="ECO:0007669"/>
    <property type="project" value="UniProtKB-UniRule"/>
</dbReference>
<dbReference type="CDD" id="cd17503">
    <property type="entry name" value="MFS_LmrB_MDR_like"/>
    <property type="match status" value="1"/>
</dbReference>
<dbReference type="FunFam" id="1.20.1250.20:FF:000021">
    <property type="entry name" value="Putative multidrug resistance protein MdtD"/>
    <property type="match status" value="1"/>
</dbReference>
<dbReference type="FunFam" id="1.20.1720.10:FF:000001">
    <property type="entry name" value="Putative multidrug resistance protein MdtD"/>
    <property type="match status" value="1"/>
</dbReference>
<dbReference type="Gene3D" id="1.20.1250.20">
    <property type="entry name" value="MFS general substrate transporter like domains"/>
    <property type="match status" value="1"/>
</dbReference>
<dbReference type="Gene3D" id="1.20.1720.10">
    <property type="entry name" value="Multidrug resistance protein D"/>
    <property type="match status" value="1"/>
</dbReference>
<dbReference type="HAMAP" id="MF_01577">
    <property type="entry name" value="MFS_MdtD"/>
    <property type="match status" value="1"/>
</dbReference>
<dbReference type="InterPro" id="IPR004638">
    <property type="entry name" value="EmrB-like"/>
</dbReference>
<dbReference type="InterPro" id="IPR011701">
    <property type="entry name" value="MFS"/>
</dbReference>
<dbReference type="InterPro" id="IPR020846">
    <property type="entry name" value="MFS_dom"/>
</dbReference>
<dbReference type="InterPro" id="IPR036259">
    <property type="entry name" value="MFS_trans_sf"/>
</dbReference>
<dbReference type="InterPro" id="IPR023721">
    <property type="entry name" value="Multi-R_MdtD"/>
</dbReference>
<dbReference type="NCBIfam" id="TIGR00711">
    <property type="entry name" value="efflux_EmrB"/>
    <property type="match status" value="1"/>
</dbReference>
<dbReference type="NCBIfam" id="NF007799">
    <property type="entry name" value="PRK10504.1"/>
    <property type="match status" value="1"/>
</dbReference>
<dbReference type="PANTHER" id="PTHR42718:SF46">
    <property type="entry name" value="BLR6921 PROTEIN"/>
    <property type="match status" value="1"/>
</dbReference>
<dbReference type="PANTHER" id="PTHR42718">
    <property type="entry name" value="MAJOR FACILITATOR SUPERFAMILY MULTIDRUG TRANSPORTER MFSC"/>
    <property type="match status" value="1"/>
</dbReference>
<dbReference type="Pfam" id="PF07690">
    <property type="entry name" value="MFS_1"/>
    <property type="match status" value="1"/>
</dbReference>
<dbReference type="PRINTS" id="PR01036">
    <property type="entry name" value="TCRTETB"/>
</dbReference>
<dbReference type="SUPFAM" id="SSF103473">
    <property type="entry name" value="MFS general substrate transporter"/>
    <property type="match status" value="1"/>
</dbReference>
<dbReference type="PROSITE" id="PS50850">
    <property type="entry name" value="MFS"/>
    <property type="match status" value="1"/>
</dbReference>
<gene>
    <name evidence="1" type="primary">mdtD</name>
    <name type="ordered locus">ECA3187</name>
</gene>
<feature type="chain" id="PRO_0000268595" description="Putative multidrug resistance protein MdtD">
    <location>
        <begin position="1"/>
        <end position="466"/>
    </location>
</feature>
<feature type="transmembrane region" description="Helical" evidence="1">
    <location>
        <begin position="11"/>
        <end position="31"/>
    </location>
</feature>
<feature type="transmembrane region" description="Helical" evidence="1">
    <location>
        <begin position="48"/>
        <end position="68"/>
    </location>
</feature>
<feature type="transmembrane region" description="Helical" evidence="1">
    <location>
        <begin position="71"/>
        <end position="91"/>
    </location>
</feature>
<feature type="transmembrane region" description="Helical" evidence="1">
    <location>
        <begin position="105"/>
        <end position="125"/>
    </location>
</feature>
<feature type="transmembrane region" description="Helical" evidence="1">
    <location>
        <begin position="137"/>
        <end position="157"/>
    </location>
</feature>
<feature type="transmembrane region" description="Helical" evidence="1">
    <location>
        <begin position="164"/>
        <end position="184"/>
    </location>
</feature>
<feature type="transmembrane region" description="Helical" evidence="1">
    <location>
        <begin position="194"/>
        <end position="214"/>
    </location>
</feature>
<feature type="transmembrane region" description="Helical" evidence="1">
    <location>
        <begin position="218"/>
        <end position="238"/>
    </location>
</feature>
<feature type="transmembrane region" description="Helical" evidence="1">
    <location>
        <begin position="262"/>
        <end position="282"/>
    </location>
</feature>
<feature type="transmembrane region" description="Helical" evidence="1">
    <location>
        <begin position="292"/>
        <end position="312"/>
    </location>
</feature>
<feature type="transmembrane region" description="Helical" evidence="1">
    <location>
        <begin position="328"/>
        <end position="347"/>
    </location>
</feature>
<feature type="transmembrane region" description="Helical" evidence="1">
    <location>
        <begin position="351"/>
        <end position="370"/>
    </location>
</feature>
<feature type="transmembrane region" description="Helical" evidence="1">
    <location>
        <begin position="402"/>
        <end position="422"/>
    </location>
</feature>
<feature type="transmembrane region" description="Helical" evidence="1">
    <location>
        <begin position="429"/>
        <end position="449"/>
    </location>
</feature>
<proteinExistence type="inferred from homology"/>
<sequence length="466" mass="50720">MTQPASVRWQLWIVAFGFFMQTLDTTIVNTALPSMAASLNESPLHMHSVIVSYVLTVAVMLPASGWLADRIGVKNIFFAAILLFTLGSLLCARSETLDELLISRVIQGIGGAMMVPVGRLTVMKIVPRDQYMAAMTFVTLPGQIGPLLGPALGGFLVEYASWHWIFLINLPVGIIGALATWFLMPNYTMQTQRFDISGFVWLAVGMATLTLALDGNRSLGIPPIAIFALIAIGLIALLSYWLHARRNERALFNLRLFDTHTFSIGLTGGLLARIGSGMLPFMTPLFLQLGMGFSPFHAGLMMVPMVLGSMGIKRVVVQIVNRFGYRRVLVASTLLLALVTALFALVALMQWIWMIPVVLFFLGTVNAIRFSTMNTLTLKDLPDPLASGGNSLLSMTMQLSTSLGVSIAGILLGIFSQPHIAAESGATHTVFLYTYLSMVVIIALPALIFNRVPPDTLKQSTLARKS</sequence>
<comment type="subcellular location">
    <subcellularLocation>
        <location evidence="1">Cell inner membrane</location>
        <topology evidence="1">Multi-pass membrane protein</topology>
    </subcellularLocation>
</comment>
<comment type="similarity">
    <text evidence="1">Belongs to the major facilitator superfamily. TCR/Tet family.</text>
</comment>
<accession>Q6D2A9</accession>
<name>MDTD_PECAS</name>
<keyword id="KW-0997">Cell inner membrane</keyword>
<keyword id="KW-1003">Cell membrane</keyword>
<keyword id="KW-0472">Membrane</keyword>
<keyword id="KW-1185">Reference proteome</keyword>
<keyword id="KW-0812">Transmembrane</keyword>
<keyword id="KW-1133">Transmembrane helix</keyword>
<keyword id="KW-0813">Transport</keyword>
<protein>
    <recommendedName>
        <fullName evidence="1">Putative multidrug resistance protein MdtD</fullName>
    </recommendedName>
</protein>
<reference key="1">
    <citation type="journal article" date="2004" name="Proc. Natl. Acad. Sci. U.S.A.">
        <title>Genome sequence of the enterobacterial phytopathogen Erwinia carotovora subsp. atroseptica and characterization of virulence factors.</title>
        <authorList>
            <person name="Bell K.S."/>
            <person name="Sebaihia M."/>
            <person name="Pritchard L."/>
            <person name="Holden M.T.G."/>
            <person name="Hyman L.J."/>
            <person name="Holeva M.C."/>
            <person name="Thomson N.R."/>
            <person name="Bentley S.D."/>
            <person name="Churcher L.J.C."/>
            <person name="Mungall K."/>
            <person name="Atkin R."/>
            <person name="Bason N."/>
            <person name="Brooks K."/>
            <person name="Chillingworth T."/>
            <person name="Clark K."/>
            <person name="Doggett J."/>
            <person name="Fraser A."/>
            <person name="Hance Z."/>
            <person name="Hauser H."/>
            <person name="Jagels K."/>
            <person name="Moule S."/>
            <person name="Norbertczak H."/>
            <person name="Ormond D."/>
            <person name="Price C."/>
            <person name="Quail M.A."/>
            <person name="Sanders M."/>
            <person name="Walker D."/>
            <person name="Whitehead S."/>
            <person name="Salmond G.P.C."/>
            <person name="Birch P.R.J."/>
            <person name="Parkhill J."/>
            <person name="Toth I.K."/>
        </authorList>
    </citation>
    <scope>NUCLEOTIDE SEQUENCE [LARGE SCALE GENOMIC DNA]</scope>
    <source>
        <strain>SCRI 1043 / ATCC BAA-672</strain>
    </source>
</reference>
<organism>
    <name type="scientific">Pectobacterium atrosepticum (strain SCRI 1043 / ATCC BAA-672)</name>
    <name type="common">Erwinia carotovora subsp. atroseptica</name>
    <dbReference type="NCBI Taxonomy" id="218491"/>
    <lineage>
        <taxon>Bacteria</taxon>
        <taxon>Pseudomonadati</taxon>
        <taxon>Pseudomonadota</taxon>
        <taxon>Gammaproteobacteria</taxon>
        <taxon>Enterobacterales</taxon>
        <taxon>Pectobacteriaceae</taxon>
        <taxon>Pectobacterium</taxon>
    </lineage>
</organism>
<evidence type="ECO:0000255" key="1">
    <source>
        <dbReference type="HAMAP-Rule" id="MF_01577"/>
    </source>
</evidence>